<reference key="1">
    <citation type="submission" date="2002-12" db="EMBL/GenBank/DDBJ databases">
        <title>Complete genome sequence of Vibrio vulnificus CMCP6.</title>
        <authorList>
            <person name="Rhee J.H."/>
            <person name="Kim S.Y."/>
            <person name="Chung S.S."/>
            <person name="Kim J.J."/>
            <person name="Moon Y.H."/>
            <person name="Jeong H."/>
            <person name="Choy H.E."/>
        </authorList>
    </citation>
    <scope>NUCLEOTIDE SEQUENCE [LARGE SCALE GENOMIC DNA]</scope>
    <source>
        <strain>CMCP6</strain>
    </source>
</reference>
<name>PCP_VIBVU</name>
<feature type="chain" id="PRO_0000184750" description="Pyrrolidone-carboxylate peptidase">
    <location>
        <begin position="1"/>
        <end position="212"/>
    </location>
</feature>
<feature type="active site" evidence="1">
    <location>
        <position position="80"/>
    </location>
</feature>
<feature type="active site" evidence="1">
    <location>
        <position position="143"/>
    </location>
</feature>
<feature type="active site" evidence="1">
    <location>
        <position position="165"/>
    </location>
</feature>
<accession>Q8D4N5</accession>
<keyword id="KW-0963">Cytoplasm</keyword>
<keyword id="KW-0378">Hydrolase</keyword>
<keyword id="KW-0645">Protease</keyword>
<keyword id="KW-0788">Thiol protease</keyword>
<proteinExistence type="inferred from homology"/>
<gene>
    <name evidence="1" type="primary">pcp</name>
    <name type="ordered locus">VV2_1257</name>
</gene>
<dbReference type="EC" id="3.4.19.3" evidence="1"/>
<dbReference type="EMBL" id="AE016796">
    <property type="protein sequence ID" value="AAO08151.1"/>
    <property type="molecule type" value="Genomic_DNA"/>
</dbReference>
<dbReference type="RefSeq" id="WP_011082146.1">
    <property type="nucleotide sequence ID" value="NC_004460.2"/>
</dbReference>
<dbReference type="SMR" id="Q8D4N5"/>
<dbReference type="MEROPS" id="C15.001"/>
<dbReference type="KEGG" id="vvu:VV2_1257"/>
<dbReference type="HOGENOM" id="CLU_043960_4_0_6"/>
<dbReference type="Proteomes" id="UP000002275">
    <property type="component" value="Chromosome 2"/>
</dbReference>
<dbReference type="GO" id="GO:0005829">
    <property type="term" value="C:cytosol"/>
    <property type="evidence" value="ECO:0007669"/>
    <property type="project" value="InterPro"/>
</dbReference>
<dbReference type="GO" id="GO:0016920">
    <property type="term" value="F:pyroglutamyl-peptidase activity"/>
    <property type="evidence" value="ECO:0007669"/>
    <property type="project" value="UniProtKB-UniRule"/>
</dbReference>
<dbReference type="GO" id="GO:0006508">
    <property type="term" value="P:proteolysis"/>
    <property type="evidence" value="ECO:0007669"/>
    <property type="project" value="UniProtKB-KW"/>
</dbReference>
<dbReference type="CDD" id="cd00501">
    <property type="entry name" value="Peptidase_C15"/>
    <property type="match status" value="1"/>
</dbReference>
<dbReference type="FunFam" id="3.40.630.20:FF:000001">
    <property type="entry name" value="Pyrrolidone-carboxylate peptidase"/>
    <property type="match status" value="1"/>
</dbReference>
<dbReference type="Gene3D" id="3.40.630.20">
    <property type="entry name" value="Peptidase C15, pyroglutamyl peptidase I-like"/>
    <property type="match status" value="1"/>
</dbReference>
<dbReference type="HAMAP" id="MF_00417">
    <property type="entry name" value="Pyrrolid_peptidase"/>
    <property type="match status" value="1"/>
</dbReference>
<dbReference type="InterPro" id="IPR000816">
    <property type="entry name" value="Peptidase_C15"/>
</dbReference>
<dbReference type="InterPro" id="IPR016125">
    <property type="entry name" value="Peptidase_C15-like"/>
</dbReference>
<dbReference type="InterPro" id="IPR036440">
    <property type="entry name" value="Peptidase_C15-like_sf"/>
</dbReference>
<dbReference type="InterPro" id="IPR029762">
    <property type="entry name" value="PGP-I_bact-type"/>
</dbReference>
<dbReference type="InterPro" id="IPR033694">
    <property type="entry name" value="PGPEP1_Cys_AS"/>
</dbReference>
<dbReference type="NCBIfam" id="NF009676">
    <property type="entry name" value="PRK13197.1"/>
    <property type="match status" value="1"/>
</dbReference>
<dbReference type="NCBIfam" id="TIGR00504">
    <property type="entry name" value="pyro_pdase"/>
    <property type="match status" value="1"/>
</dbReference>
<dbReference type="PANTHER" id="PTHR23402">
    <property type="entry name" value="PROTEASE FAMILY C15 PYROGLUTAMYL-PEPTIDASE I-RELATED"/>
    <property type="match status" value="1"/>
</dbReference>
<dbReference type="PANTHER" id="PTHR23402:SF1">
    <property type="entry name" value="PYROGLUTAMYL-PEPTIDASE I"/>
    <property type="match status" value="1"/>
</dbReference>
<dbReference type="Pfam" id="PF01470">
    <property type="entry name" value="Peptidase_C15"/>
    <property type="match status" value="1"/>
</dbReference>
<dbReference type="PIRSF" id="PIRSF015592">
    <property type="entry name" value="Prld-crbxl_pptds"/>
    <property type="match status" value="1"/>
</dbReference>
<dbReference type="PRINTS" id="PR00706">
    <property type="entry name" value="PYROGLUPTASE"/>
</dbReference>
<dbReference type="SUPFAM" id="SSF53182">
    <property type="entry name" value="Pyrrolidone carboxyl peptidase (pyroglutamate aminopeptidase)"/>
    <property type="match status" value="1"/>
</dbReference>
<dbReference type="PROSITE" id="PS01334">
    <property type="entry name" value="PYRASE_CYS"/>
    <property type="match status" value="1"/>
</dbReference>
<comment type="function">
    <text evidence="1">Removes 5-oxoproline from various penultimate amino acid residues except L-proline.</text>
</comment>
<comment type="catalytic activity">
    <reaction evidence="1">
        <text>Release of an N-terminal pyroglutamyl group from a polypeptide, the second amino acid generally not being Pro.</text>
        <dbReference type="EC" id="3.4.19.3"/>
    </reaction>
</comment>
<comment type="subunit">
    <text evidence="1">Homotetramer.</text>
</comment>
<comment type="subcellular location">
    <subcellularLocation>
        <location evidence="1">Cytoplasm</location>
    </subcellularLocation>
</comment>
<comment type="similarity">
    <text evidence="1">Belongs to the peptidase C15 family.</text>
</comment>
<sequence>MRKVLLTGFEPFGGESINPSLELVKQMASRALPQVEIIGCEVPVVRYQAIETVLQAVETHQPDLVLMIGQASGRCAITPERVAINLDDYRIEDNAGHQPVDEPIIATGPAAYFSTLPVKAITHALQQAGIPCQLSHSAGTFVCNHLFYGVQHHLHTRAIRSGFIHIPLLPEQASASNQPSMSLETLVHGLEMMMMTCLETEQDTKHTGGTIC</sequence>
<organism>
    <name type="scientific">Vibrio vulnificus (strain CMCP6)</name>
    <dbReference type="NCBI Taxonomy" id="216895"/>
    <lineage>
        <taxon>Bacteria</taxon>
        <taxon>Pseudomonadati</taxon>
        <taxon>Pseudomonadota</taxon>
        <taxon>Gammaproteobacteria</taxon>
        <taxon>Vibrionales</taxon>
        <taxon>Vibrionaceae</taxon>
        <taxon>Vibrio</taxon>
    </lineage>
</organism>
<evidence type="ECO:0000255" key="1">
    <source>
        <dbReference type="HAMAP-Rule" id="MF_00417"/>
    </source>
</evidence>
<protein>
    <recommendedName>
        <fullName evidence="1">Pyrrolidone-carboxylate peptidase</fullName>
        <ecNumber evidence="1">3.4.19.3</ecNumber>
    </recommendedName>
    <alternativeName>
        <fullName evidence="1">5-oxoprolyl-peptidase</fullName>
    </alternativeName>
    <alternativeName>
        <fullName evidence="1">Pyroglutamyl-peptidase I</fullName>
        <shortName evidence="1">PGP-I</shortName>
        <shortName evidence="1">Pyrase</shortName>
    </alternativeName>
</protein>